<organism>
    <name type="scientific">Schizosaccharomyces pombe (strain 972 / ATCC 24843)</name>
    <name type="common">Fission yeast</name>
    <dbReference type="NCBI Taxonomy" id="284812"/>
    <lineage>
        <taxon>Eukaryota</taxon>
        <taxon>Fungi</taxon>
        <taxon>Dikarya</taxon>
        <taxon>Ascomycota</taxon>
        <taxon>Taphrinomycotina</taxon>
        <taxon>Schizosaccharomycetes</taxon>
        <taxon>Schizosaccharomycetales</taxon>
        <taxon>Schizosaccharomycetaceae</taxon>
        <taxon>Schizosaccharomyces</taxon>
    </lineage>
</organism>
<evidence type="ECO:0000250" key="1">
    <source>
        <dbReference type="UniProtKB" id="P38712"/>
    </source>
</evidence>
<evidence type="ECO:0000255" key="2">
    <source>
        <dbReference type="PROSITE-ProRule" id="PRU00541"/>
    </source>
</evidence>
<evidence type="ECO:0000255" key="3">
    <source>
        <dbReference type="PROSITE-ProRule" id="PRU00542"/>
    </source>
</evidence>
<evidence type="ECO:0000256" key="4">
    <source>
        <dbReference type="SAM" id="MobiDB-lite"/>
    </source>
</evidence>
<evidence type="ECO:0000305" key="5"/>
<comment type="function">
    <text evidence="1">ATP-dependent rRNA helicase required for pre-ribosomal RNA processing. Involved in the maturation of the 35S-pre-rRNA and to its cleavage to mature 18S rRNA.</text>
</comment>
<comment type="catalytic activity">
    <reaction evidence="1">
        <text>ATP + H2O = ADP + phosphate + H(+)</text>
        <dbReference type="Rhea" id="RHEA:13065"/>
        <dbReference type="ChEBI" id="CHEBI:15377"/>
        <dbReference type="ChEBI" id="CHEBI:15378"/>
        <dbReference type="ChEBI" id="CHEBI:30616"/>
        <dbReference type="ChEBI" id="CHEBI:43474"/>
        <dbReference type="ChEBI" id="CHEBI:456216"/>
        <dbReference type="EC" id="3.6.4.13"/>
    </reaction>
</comment>
<comment type="subunit">
    <text evidence="1">Interacts with the SSU processome.</text>
</comment>
<comment type="subcellular location">
    <subcellularLocation>
        <location evidence="5">Nucleus</location>
    </subcellularLocation>
</comment>
<comment type="domain">
    <text evidence="5">The Q motif is unique to and characteristic of the DEAD box family of RNA helicases and controls ATP binding and hydrolysis.</text>
</comment>
<comment type="similarity">
    <text evidence="5">Belongs to the DEAD box helicase family. DDX47/RRP3 subfamily.</text>
</comment>
<dbReference type="EC" id="3.6.4.13" evidence="1"/>
<dbReference type="EMBL" id="CU329670">
    <property type="protein sequence ID" value="CAB90153.1"/>
    <property type="molecule type" value="Genomic_DNA"/>
</dbReference>
<dbReference type="RefSeq" id="NP_593835.1">
    <property type="nucleotide sequence ID" value="NM_001019264.2"/>
</dbReference>
<dbReference type="SMR" id="Q9P6N8"/>
<dbReference type="BioGRID" id="279986">
    <property type="interactions" value="2"/>
</dbReference>
<dbReference type="FunCoup" id="Q9P6N8">
    <property type="interactions" value="884"/>
</dbReference>
<dbReference type="STRING" id="284812.Q9P6N8"/>
<dbReference type="iPTMnet" id="Q9P6N8"/>
<dbReference type="PaxDb" id="4896-SPAC823.08c.1"/>
<dbReference type="EnsemblFungi" id="SPAC823.08c.1">
    <property type="protein sequence ID" value="SPAC823.08c.1:pep"/>
    <property type="gene ID" value="SPAC823.08c"/>
</dbReference>
<dbReference type="GeneID" id="2543571"/>
<dbReference type="KEGG" id="spo:2543571"/>
<dbReference type="PomBase" id="SPAC823.08c">
    <property type="gene designation" value="rrp3"/>
</dbReference>
<dbReference type="VEuPathDB" id="FungiDB:SPAC823.08c"/>
<dbReference type="eggNOG" id="KOG0330">
    <property type="taxonomic scope" value="Eukaryota"/>
</dbReference>
<dbReference type="HOGENOM" id="CLU_003041_1_1_1"/>
<dbReference type="InParanoid" id="Q9P6N8"/>
<dbReference type="OMA" id="GIGIKCC"/>
<dbReference type="PhylomeDB" id="Q9P6N8"/>
<dbReference type="Reactome" id="R-SPO-6791226">
    <property type="pathway name" value="Major pathway of rRNA processing in the nucleolus and cytosol"/>
</dbReference>
<dbReference type="PRO" id="PR:Q9P6N8"/>
<dbReference type="Proteomes" id="UP000002485">
    <property type="component" value="Chromosome I"/>
</dbReference>
<dbReference type="GO" id="GO:0005829">
    <property type="term" value="C:cytosol"/>
    <property type="evidence" value="ECO:0007005"/>
    <property type="project" value="PomBase"/>
</dbReference>
<dbReference type="GO" id="GO:0005730">
    <property type="term" value="C:nucleolus"/>
    <property type="evidence" value="ECO:0000250"/>
    <property type="project" value="PomBase"/>
</dbReference>
<dbReference type="GO" id="GO:0005634">
    <property type="term" value="C:nucleus"/>
    <property type="evidence" value="ECO:0007005"/>
    <property type="project" value="PomBase"/>
</dbReference>
<dbReference type="GO" id="GO:0005524">
    <property type="term" value="F:ATP binding"/>
    <property type="evidence" value="ECO:0007669"/>
    <property type="project" value="UniProtKB-KW"/>
</dbReference>
<dbReference type="GO" id="GO:0016887">
    <property type="term" value="F:ATP hydrolysis activity"/>
    <property type="evidence" value="ECO:0007669"/>
    <property type="project" value="RHEA"/>
</dbReference>
<dbReference type="GO" id="GO:0003723">
    <property type="term" value="F:RNA binding"/>
    <property type="evidence" value="ECO:0007669"/>
    <property type="project" value="UniProtKB-KW"/>
</dbReference>
<dbReference type="GO" id="GO:0003724">
    <property type="term" value="F:RNA helicase activity"/>
    <property type="evidence" value="ECO:0000250"/>
    <property type="project" value="PomBase"/>
</dbReference>
<dbReference type="GO" id="GO:0006364">
    <property type="term" value="P:rRNA processing"/>
    <property type="evidence" value="ECO:0000318"/>
    <property type="project" value="GO_Central"/>
</dbReference>
<dbReference type="CDD" id="cd17954">
    <property type="entry name" value="DEADc_DDX47"/>
    <property type="match status" value="1"/>
</dbReference>
<dbReference type="CDD" id="cd18787">
    <property type="entry name" value="SF2_C_DEAD"/>
    <property type="match status" value="1"/>
</dbReference>
<dbReference type="FunFam" id="3.40.50.300:FF:000626">
    <property type="entry name" value="probable ATP-dependent RNA helicase DDX47"/>
    <property type="match status" value="1"/>
</dbReference>
<dbReference type="FunFam" id="3.40.50.300:FF:000681">
    <property type="entry name" value="probable ATP-dependent RNA helicase DDX47"/>
    <property type="match status" value="1"/>
</dbReference>
<dbReference type="Gene3D" id="3.40.50.300">
    <property type="entry name" value="P-loop containing nucleotide triphosphate hydrolases"/>
    <property type="match status" value="2"/>
</dbReference>
<dbReference type="InterPro" id="IPR044765">
    <property type="entry name" value="DDX47/Rrp3_DEADc"/>
</dbReference>
<dbReference type="InterPro" id="IPR011545">
    <property type="entry name" value="DEAD/DEAH_box_helicase_dom"/>
</dbReference>
<dbReference type="InterPro" id="IPR050079">
    <property type="entry name" value="DEAD_box_RNA_helicase"/>
</dbReference>
<dbReference type="InterPro" id="IPR014001">
    <property type="entry name" value="Helicase_ATP-bd"/>
</dbReference>
<dbReference type="InterPro" id="IPR001650">
    <property type="entry name" value="Helicase_C-like"/>
</dbReference>
<dbReference type="InterPro" id="IPR027417">
    <property type="entry name" value="P-loop_NTPase"/>
</dbReference>
<dbReference type="InterPro" id="IPR000629">
    <property type="entry name" value="RNA-helicase_DEAD-box_CS"/>
</dbReference>
<dbReference type="InterPro" id="IPR014014">
    <property type="entry name" value="RNA_helicase_DEAD_Q_motif"/>
</dbReference>
<dbReference type="PANTHER" id="PTHR47959">
    <property type="entry name" value="ATP-DEPENDENT RNA HELICASE RHLE-RELATED"/>
    <property type="match status" value="1"/>
</dbReference>
<dbReference type="PANTHER" id="PTHR47959:SF20">
    <property type="entry name" value="RNA HELICASE"/>
    <property type="match status" value="1"/>
</dbReference>
<dbReference type="Pfam" id="PF00270">
    <property type="entry name" value="DEAD"/>
    <property type="match status" value="1"/>
</dbReference>
<dbReference type="Pfam" id="PF00271">
    <property type="entry name" value="Helicase_C"/>
    <property type="match status" value="1"/>
</dbReference>
<dbReference type="SMART" id="SM00487">
    <property type="entry name" value="DEXDc"/>
    <property type="match status" value="1"/>
</dbReference>
<dbReference type="SMART" id="SM00490">
    <property type="entry name" value="HELICc"/>
    <property type="match status" value="1"/>
</dbReference>
<dbReference type="SUPFAM" id="SSF52540">
    <property type="entry name" value="P-loop containing nucleoside triphosphate hydrolases"/>
    <property type="match status" value="1"/>
</dbReference>
<dbReference type="PROSITE" id="PS00039">
    <property type="entry name" value="DEAD_ATP_HELICASE"/>
    <property type="match status" value="1"/>
</dbReference>
<dbReference type="PROSITE" id="PS51192">
    <property type="entry name" value="HELICASE_ATP_BIND_1"/>
    <property type="match status" value="1"/>
</dbReference>
<dbReference type="PROSITE" id="PS51194">
    <property type="entry name" value="HELICASE_CTER"/>
    <property type="match status" value="1"/>
</dbReference>
<dbReference type="PROSITE" id="PS51195">
    <property type="entry name" value="Q_MOTIF"/>
    <property type="match status" value="1"/>
</dbReference>
<accession>Q9P6N8</accession>
<proteinExistence type="inferred from homology"/>
<name>RRP3_SCHPO</name>
<sequence length="465" mass="51864">MAPSEKKLTEDKKNSSLNKKIETSNSSSEKSSENNNGDSQNNEAPKTFKELGVIDELCEACEKLGFKTPTPIQQEAIPVVLNKRDVIGLAQTGSGKTAAFALPVIQELWNNPSPFFAVVLAPTRELAYQISEQFEAIGGSIGVRSVVIVGGMDMVTQAVALSKKPHVLVCTPGRLMDHLENTKGFSLKNLKYLIMDEADRLLDMDFGPIIDKILKIIPHERRTLLFSATMTSKVEKLQRASLHQPVRVAVSSKFSTVDTLIQRYLFFPFKHKDTYLVYLVNELAGNSIIIFARTVNDTQRLAILLRTLGFSAIPLHGQLSQSNRLGALNKFKSGARSTLVATDVAARGLDIPLVDVVINYDIPTDSKAYIHRVGRTARAGRAGKSIALVTQYDLEPFLRIEATIGKKMQEYEIDKEGVFLLSERVGEAQREAIIQMKEIHDRRKSKGKLHTKRKRDDLDREEQIY</sequence>
<gene>
    <name evidence="1" type="primary">rrp3</name>
    <name type="ORF">SPAC823.08c</name>
</gene>
<keyword id="KW-0067">ATP-binding</keyword>
<keyword id="KW-0347">Helicase</keyword>
<keyword id="KW-0378">Hydrolase</keyword>
<keyword id="KW-0547">Nucleotide-binding</keyword>
<keyword id="KW-0539">Nucleus</keyword>
<keyword id="KW-1185">Reference proteome</keyword>
<keyword id="KW-0690">Ribosome biogenesis</keyword>
<keyword id="KW-0694">RNA-binding</keyword>
<keyword id="KW-0698">rRNA processing</keyword>
<protein>
    <recommendedName>
        <fullName evidence="5">ATP-dependent rRNA helicase rrp3</fullName>
        <ecNumber evidence="1">3.6.4.13</ecNumber>
    </recommendedName>
</protein>
<feature type="chain" id="PRO_0000232278" description="ATP-dependent rRNA helicase rrp3">
    <location>
        <begin position="1"/>
        <end position="465"/>
    </location>
</feature>
<feature type="domain" description="Helicase ATP-binding" evidence="2">
    <location>
        <begin position="77"/>
        <end position="248"/>
    </location>
</feature>
<feature type="domain" description="Helicase C-terminal" evidence="3">
    <location>
        <begin position="275"/>
        <end position="419"/>
    </location>
</feature>
<feature type="region of interest" description="Disordered" evidence="4">
    <location>
        <begin position="1"/>
        <end position="44"/>
    </location>
</feature>
<feature type="region of interest" description="Disordered" evidence="4">
    <location>
        <begin position="442"/>
        <end position="465"/>
    </location>
</feature>
<feature type="short sequence motif" description="Q motif" evidence="5">
    <location>
        <begin position="46"/>
        <end position="74"/>
    </location>
</feature>
<feature type="short sequence motif" description="DEAD box" evidence="5">
    <location>
        <begin position="196"/>
        <end position="199"/>
    </location>
</feature>
<feature type="compositionally biased region" description="Basic and acidic residues" evidence="4">
    <location>
        <begin position="1"/>
        <end position="22"/>
    </location>
</feature>
<feature type="compositionally biased region" description="Low complexity" evidence="4">
    <location>
        <begin position="23"/>
        <end position="36"/>
    </location>
</feature>
<feature type="compositionally biased region" description="Basic residues" evidence="4">
    <location>
        <begin position="442"/>
        <end position="453"/>
    </location>
</feature>
<feature type="compositionally biased region" description="Basic and acidic residues" evidence="4">
    <location>
        <begin position="454"/>
        <end position="465"/>
    </location>
</feature>
<feature type="binding site" evidence="2">
    <location>
        <begin position="90"/>
        <end position="97"/>
    </location>
    <ligand>
        <name>ATP</name>
        <dbReference type="ChEBI" id="CHEBI:30616"/>
    </ligand>
</feature>
<reference key="1">
    <citation type="journal article" date="2002" name="Nature">
        <title>The genome sequence of Schizosaccharomyces pombe.</title>
        <authorList>
            <person name="Wood V."/>
            <person name="Gwilliam R."/>
            <person name="Rajandream M.A."/>
            <person name="Lyne M.H."/>
            <person name="Lyne R."/>
            <person name="Stewart A."/>
            <person name="Sgouros J.G."/>
            <person name="Peat N."/>
            <person name="Hayles J."/>
            <person name="Baker S.G."/>
            <person name="Basham D."/>
            <person name="Bowman S."/>
            <person name="Brooks K."/>
            <person name="Brown D."/>
            <person name="Brown S."/>
            <person name="Chillingworth T."/>
            <person name="Churcher C.M."/>
            <person name="Collins M."/>
            <person name="Connor R."/>
            <person name="Cronin A."/>
            <person name="Davis P."/>
            <person name="Feltwell T."/>
            <person name="Fraser A."/>
            <person name="Gentles S."/>
            <person name="Goble A."/>
            <person name="Hamlin N."/>
            <person name="Harris D.E."/>
            <person name="Hidalgo J."/>
            <person name="Hodgson G."/>
            <person name="Holroyd S."/>
            <person name="Hornsby T."/>
            <person name="Howarth S."/>
            <person name="Huckle E.J."/>
            <person name="Hunt S."/>
            <person name="Jagels K."/>
            <person name="James K.D."/>
            <person name="Jones L."/>
            <person name="Jones M."/>
            <person name="Leather S."/>
            <person name="McDonald S."/>
            <person name="McLean J."/>
            <person name="Mooney P."/>
            <person name="Moule S."/>
            <person name="Mungall K.L."/>
            <person name="Murphy L.D."/>
            <person name="Niblett D."/>
            <person name="Odell C."/>
            <person name="Oliver K."/>
            <person name="O'Neil S."/>
            <person name="Pearson D."/>
            <person name="Quail M.A."/>
            <person name="Rabbinowitsch E."/>
            <person name="Rutherford K.M."/>
            <person name="Rutter S."/>
            <person name="Saunders D."/>
            <person name="Seeger K."/>
            <person name="Sharp S."/>
            <person name="Skelton J."/>
            <person name="Simmonds M.N."/>
            <person name="Squares R."/>
            <person name="Squares S."/>
            <person name="Stevens K."/>
            <person name="Taylor K."/>
            <person name="Taylor R.G."/>
            <person name="Tivey A."/>
            <person name="Walsh S.V."/>
            <person name="Warren T."/>
            <person name="Whitehead S."/>
            <person name="Woodward J.R."/>
            <person name="Volckaert G."/>
            <person name="Aert R."/>
            <person name="Robben J."/>
            <person name="Grymonprez B."/>
            <person name="Weltjens I."/>
            <person name="Vanstreels E."/>
            <person name="Rieger M."/>
            <person name="Schaefer M."/>
            <person name="Mueller-Auer S."/>
            <person name="Gabel C."/>
            <person name="Fuchs M."/>
            <person name="Duesterhoeft A."/>
            <person name="Fritzc C."/>
            <person name="Holzer E."/>
            <person name="Moestl D."/>
            <person name="Hilbert H."/>
            <person name="Borzym K."/>
            <person name="Langer I."/>
            <person name="Beck A."/>
            <person name="Lehrach H."/>
            <person name="Reinhardt R."/>
            <person name="Pohl T.M."/>
            <person name="Eger P."/>
            <person name="Zimmermann W."/>
            <person name="Wedler H."/>
            <person name="Wambutt R."/>
            <person name="Purnelle B."/>
            <person name="Goffeau A."/>
            <person name="Cadieu E."/>
            <person name="Dreano S."/>
            <person name="Gloux S."/>
            <person name="Lelaure V."/>
            <person name="Mottier S."/>
            <person name="Galibert F."/>
            <person name="Aves S.J."/>
            <person name="Xiang Z."/>
            <person name="Hunt C."/>
            <person name="Moore K."/>
            <person name="Hurst S.M."/>
            <person name="Lucas M."/>
            <person name="Rochet M."/>
            <person name="Gaillardin C."/>
            <person name="Tallada V.A."/>
            <person name="Garzon A."/>
            <person name="Thode G."/>
            <person name="Daga R.R."/>
            <person name="Cruzado L."/>
            <person name="Jimenez J."/>
            <person name="Sanchez M."/>
            <person name="del Rey F."/>
            <person name="Benito J."/>
            <person name="Dominguez A."/>
            <person name="Revuelta J.L."/>
            <person name="Moreno S."/>
            <person name="Armstrong J."/>
            <person name="Forsburg S.L."/>
            <person name="Cerutti L."/>
            <person name="Lowe T."/>
            <person name="McCombie W.R."/>
            <person name="Paulsen I."/>
            <person name="Potashkin J."/>
            <person name="Shpakovski G.V."/>
            <person name="Ussery D."/>
            <person name="Barrell B.G."/>
            <person name="Nurse P."/>
        </authorList>
    </citation>
    <scope>NUCLEOTIDE SEQUENCE [LARGE SCALE GENOMIC DNA]</scope>
    <source>
        <strain>972 / ATCC 24843</strain>
    </source>
</reference>